<proteinExistence type="inferred from homology"/>
<evidence type="ECO:0000255" key="1">
    <source>
        <dbReference type="HAMAP-Rule" id="MF_01017"/>
    </source>
</evidence>
<comment type="catalytic activity">
    <reaction evidence="1">
        <text>a quinone + NADH + H(+) = a quinol + NAD(+)</text>
        <dbReference type="Rhea" id="RHEA:46160"/>
        <dbReference type="ChEBI" id="CHEBI:15378"/>
        <dbReference type="ChEBI" id="CHEBI:24646"/>
        <dbReference type="ChEBI" id="CHEBI:57540"/>
        <dbReference type="ChEBI" id="CHEBI:57945"/>
        <dbReference type="ChEBI" id="CHEBI:132124"/>
        <dbReference type="EC" id="1.6.5.2"/>
    </reaction>
</comment>
<comment type="catalytic activity">
    <reaction evidence="1">
        <text>a quinone + NADPH + H(+) = a quinol + NADP(+)</text>
        <dbReference type="Rhea" id="RHEA:46164"/>
        <dbReference type="ChEBI" id="CHEBI:15378"/>
        <dbReference type="ChEBI" id="CHEBI:24646"/>
        <dbReference type="ChEBI" id="CHEBI:57783"/>
        <dbReference type="ChEBI" id="CHEBI:58349"/>
        <dbReference type="ChEBI" id="CHEBI:132124"/>
        <dbReference type="EC" id="1.6.5.2"/>
    </reaction>
</comment>
<comment type="cofactor">
    <cofactor evidence="1">
        <name>FMN</name>
        <dbReference type="ChEBI" id="CHEBI:58210"/>
    </cofactor>
    <text evidence="1">Binds 1 FMN per monomer.</text>
</comment>
<comment type="similarity">
    <text evidence="1">Belongs to the WrbA family.</text>
</comment>
<sequence>MAKVLVLYYSSYGHVETMAQHIVEGAKSVPGVEVTLKRVPETIPVDQARAIGVKVDQAAPVATVDELADYDAIIFGTPTRFGNMAGQMRTFLDQTGGLWMKGALVGKIGSVFASTGTQHGGQETTITSFHTTLLHHGMVIVGVPYACSGLVNMSEITGGTPYGATTLAGADGSRQPSANELDIARYQGKHVAELASKLAS</sequence>
<gene>
    <name type="ordered locus">Bcen2424_6131</name>
</gene>
<organism>
    <name type="scientific">Burkholderia cenocepacia (strain HI2424)</name>
    <dbReference type="NCBI Taxonomy" id="331272"/>
    <lineage>
        <taxon>Bacteria</taxon>
        <taxon>Pseudomonadati</taxon>
        <taxon>Pseudomonadota</taxon>
        <taxon>Betaproteobacteria</taxon>
        <taxon>Burkholderiales</taxon>
        <taxon>Burkholderiaceae</taxon>
        <taxon>Burkholderia</taxon>
        <taxon>Burkholderia cepacia complex</taxon>
    </lineage>
</organism>
<protein>
    <recommendedName>
        <fullName evidence="1">NAD(P)H dehydrogenase (quinone)</fullName>
        <ecNumber evidence="1">1.6.5.2</ecNumber>
    </recommendedName>
    <alternativeName>
        <fullName>Flavoprotein WrbA</fullName>
    </alternativeName>
    <alternativeName>
        <fullName evidence="1">NAD(P)H:quinone oxidoreductase</fullName>
        <shortName evidence="1">NQO</shortName>
    </alternativeName>
</protein>
<dbReference type="EC" id="1.6.5.2" evidence="1"/>
<dbReference type="EMBL" id="CP000460">
    <property type="protein sequence ID" value="ABK12863.1"/>
    <property type="molecule type" value="Genomic_DNA"/>
</dbReference>
<dbReference type="SMR" id="A0KCF0"/>
<dbReference type="KEGG" id="bch:Bcen2424_6131"/>
<dbReference type="HOGENOM" id="CLU_051402_0_2_4"/>
<dbReference type="GO" id="GO:0016020">
    <property type="term" value="C:membrane"/>
    <property type="evidence" value="ECO:0007669"/>
    <property type="project" value="TreeGrafter"/>
</dbReference>
<dbReference type="GO" id="GO:0050660">
    <property type="term" value="F:flavin adenine dinucleotide binding"/>
    <property type="evidence" value="ECO:0007669"/>
    <property type="project" value="UniProtKB-UniRule"/>
</dbReference>
<dbReference type="GO" id="GO:0010181">
    <property type="term" value="F:FMN binding"/>
    <property type="evidence" value="ECO:0007669"/>
    <property type="project" value="InterPro"/>
</dbReference>
<dbReference type="GO" id="GO:0051287">
    <property type="term" value="F:NAD binding"/>
    <property type="evidence" value="ECO:0007669"/>
    <property type="project" value="UniProtKB-UniRule"/>
</dbReference>
<dbReference type="GO" id="GO:0050136">
    <property type="term" value="F:NADH:ubiquinone reductase (non-electrogenic) activity"/>
    <property type="evidence" value="ECO:0007669"/>
    <property type="project" value="RHEA"/>
</dbReference>
<dbReference type="GO" id="GO:0050661">
    <property type="term" value="F:NADP binding"/>
    <property type="evidence" value="ECO:0007669"/>
    <property type="project" value="UniProtKB-UniRule"/>
</dbReference>
<dbReference type="GO" id="GO:0008753">
    <property type="term" value="F:NADPH dehydrogenase (quinone) activity"/>
    <property type="evidence" value="ECO:0007669"/>
    <property type="project" value="RHEA"/>
</dbReference>
<dbReference type="FunFam" id="3.40.50.360:FF:000001">
    <property type="entry name" value="NAD(P)H dehydrogenase (Quinone) FQR1-like"/>
    <property type="match status" value="1"/>
</dbReference>
<dbReference type="Gene3D" id="3.40.50.360">
    <property type="match status" value="1"/>
</dbReference>
<dbReference type="HAMAP" id="MF_01017">
    <property type="entry name" value="NQOR"/>
    <property type="match status" value="1"/>
</dbReference>
<dbReference type="InterPro" id="IPR008254">
    <property type="entry name" value="Flavodoxin/NO_synth"/>
</dbReference>
<dbReference type="InterPro" id="IPR029039">
    <property type="entry name" value="Flavoprotein-like_sf"/>
</dbReference>
<dbReference type="InterPro" id="IPR010089">
    <property type="entry name" value="Flavoprotein_WrbA-like"/>
</dbReference>
<dbReference type="InterPro" id="IPR005025">
    <property type="entry name" value="FMN_Rdtase-like_dom"/>
</dbReference>
<dbReference type="InterPro" id="IPR037513">
    <property type="entry name" value="NQO"/>
</dbReference>
<dbReference type="NCBIfam" id="TIGR01755">
    <property type="entry name" value="flav_wrbA"/>
    <property type="match status" value="1"/>
</dbReference>
<dbReference type="NCBIfam" id="NF002999">
    <property type="entry name" value="PRK03767.1"/>
    <property type="match status" value="1"/>
</dbReference>
<dbReference type="PANTHER" id="PTHR30546">
    <property type="entry name" value="FLAVODOXIN-RELATED PROTEIN WRBA-RELATED"/>
    <property type="match status" value="1"/>
</dbReference>
<dbReference type="PANTHER" id="PTHR30546:SF23">
    <property type="entry name" value="FLAVOPROTEIN-LIKE PROTEIN YCP4-RELATED"/>
    <property type="match status" value="1"/>
</dbReference>
<dbReference type="Pfam" id="PF03358">
    <property type="entry name" value="FMN_red"/>
    <property type="match status" value="1"/>
</dbReference>
<dbReference type="SUPFAM" id="SSF52218">
    <property type="entry name" value="Flavoproteins"/>
    <property type="match status" value="1"/>
</dbReference>
<dbReference type="PROSITE" id="PS50902">
    <property type="entry name" value="FLAVODOXIN_LIKE"/>
    <property type="match status" value="1"/>
</dbReference>
<feature type="chain" id="PRO_0000291009" description="NAD(P)H dehydrogenase (quinone)">
    <location>
        <begin position="1"/>
        <end position="200"/>
    </location>
</feature>
<feature type="domain" description="Flavodoxin-like" evidence="1">
    <location>
        <begin position="4"/>
        <end position="191"/>
    </location>
</feature>
<feature type="binding site" evidence="1">
    <location>
        <begin position="10"/>
        <end position="15"/>
    </location>
    <ligand>
        <name>FMN</name>
        <dbReference type="ChEBI" id="CHEBI:58210"/>
    </ligand>
</feature>
<feature type="binding site" evidence="1">
    <location>
        <position position="12"/>
    </location>
    <ligand>
        <name>NAD(+)</name>
        <dbReference type="ChEBI" id="CHEBI:57540"/>
    </ligand>
</feature>
<feature type="binding site" evidence="1">
    <location>
        <begin position="79"/>
        <end position="81"/>
    </location>
    <ligand>
        <name>FMN</name>
        <dbReference type="ChEBI" id="CHEBI:58210"/>
    </ligand>
</feature>
<feature type="binding site" evidence="1">
    <location>
        <position position="99"/>
    </location>
    <ligand>
        <name>substrate</name>
    </ligand>
</feature>
<feature type="binding site" evidence="1">
    <location>
        <begin position="114"/>
        <end position="120"/>
    </location>
    <ligand>
        <name>FMN</name>
        <dbReference type="ChEBI" id="CHEBI:58210"/>
    </ligand>
</feature>
<feature type="binding site" evidence="1">
    <location>
        <position position="135"/>
    </location>
    <ligand>
        <name>FMN</name>
        <dbReference type="ChEBI" id="CHEBI:58210"/>
    </ligand>
</feature>
<reference key="1">
    <citation type="submission" date="2006-08" db="EMBL/GenBank/DDBJ databases">
        <title>Complete sequence of chromosome 3 of Burkholderia cenocepacia HI2424.</title>
        <authorList>
            <person name="Copeland A."/>
            <person name="Lucas S."/>
            <person name="Lapidus A."/>
            <person name="Barry K."/>
            <person name="Detter J.C."/>
            <person name="Glavina del Rio T."/>
            <person name="Hammon N."/>
            <person name="Israni S."/>
            <person name="Pitluck S."/>
            <person name="Chain P."/>
            <person name="Malfatti S."/>
            <person name="Shin M."/>
            <person name="Vergez L."/>
            <person name="Schmutz J."/>
            <person name="Larimer F."/>
            <person name="Land M."/>
            <person name="Hauser L."/>
            <person name="Kyrpides N."/>
            <person name="Kim E."/>
            <person name="LiPuma J.J."/>
            <person name="Gonzalez C.F."/>
            <person name="Konstantinidis K."/>
            <person name="Tiedje J.M."/>
            <person name="Richardson P."/>
        </authorList>
    </citation>
    <scope>NUCLEOTIDE SEQUENCE [LARGE SCALE GENOMIC DNA]</scope>
    <source>
        <strain>HI2424</strain>
    </source>
</reference>
<accession>A0KCF0</accession>
<name>NQOR_BURCH</name>
<keyword id="KW-0285">Flavoprotein</keyword>
<keyword id="KW-0288">FMN</keyword>
<keyword id="KW-0520">NAD</keyword>
<keyword id="KW-0521">NADP</keyword>
<keyword id="KW-0547">Nucleotide-binding</keyword>
<keyword id="KW-0560">Oxidoreductase</keyword>